<reference key="1">
    <citation type="submission" date="2005-01" db="EMBL/GenBank/DDBJ databases">
        <title>Characterization of cytospin A as a multiple coiled coil protein involved in cytokinesis and spindle organization.</title>
        <authorList>
            <person name="Huang C.-H."/>
            <person name="Ye T."/>
            <person name="Chen Y."/>
        </authorList>
    </citation>
    <scope>NUCLEOTIDE SEQUENCE [MRNA]</scope>
</reference>
<reference key="2">
    <citation type="journal article" date="2013" name="Nature">
        <title>The zebrafish reference genome sequence and its relationship to the human genome.</title>
        <authorList>
            <person name="Howe K."/>
            <person name="Clark M.D."/>
            <person name="Torroja C.F."/>
            <person name="Torrance J."/>
            <person name="Berthelot C."/>
            <person name="Muffato M."/>
            <person name="Collins J.E."/>
            <person name="Humphray S."/>
            <person name="McLaren K."/>
            <person name="Matthews L."/>
            <person name="McLaren S."/>
            <person name="Sealy I."/>
            <person name="Caccamo M."/>
            <person name="Churcher C."/>
            <person name="Scott C."/>
            <person name="Barrett J.C."/>
            <person name="Koch R."/>
            <person name="Rauch G.J."/>
            <person name="White S."/>
            <person name="Chow W."/>
            <person name="Kilian B."/>
            <person name="Quintais L.T."/>
            <person name="Guerra-Assuncao J.A."/>
            <person name="Zhou Y."/>
            <person name="Gu Y."/>
            <person name="Yen J."/>
            <person name="Vogel J.H."/>
            <person name="Eyre T."/>
            <person name="Redmond S."/>
            <person name="Banerjee R."/>
            <person name="Chi J."/>
            <person name="Fu B."/>
            <person name="Langley E."/>
            <person name="Maguire S.F."/>
            <person name="Laird G.K."/>
            <person name="Lloyd D."/>
            <person name="Kenyon E."/>
            <person name="Donaldson S."/>
            <person name="Sehra H."/>
            <person name="Almeida-King J."/>
            <person name="Loveland J."/>
            <person name="Trevanion S."/>
            <person name="Jones M."/>
            <person name="Quail M."/>
            <person name="Willey D."/>
            <person name="Hunt A."/>
            <person name="Burton J."/>
            <person name="Sims S."/>
            <person name="McLay K."/>
            <person name="Plumb B."/>
            <person name="Davis J."/>
            <person name="Clee C."/>
            <person name="Oliver K."/>
            <person name="Clark R."/>
            <person name="Riddle C."/>
            <person name="Elliot D."/>
            <person name="Threadgold G."/>
            <person name="Harden G."/>
            <person name="Ware D."/>
            <person name="Begum S."/>
            <person name="Mortimore B."/>
            <person name="Kerry G."/>
            <person name="Heath P."/>
            <person name="Phillimore B."/>
            <person name="Tracey A."/>
            <person name="Corby N."/>
            <person name="Dunn M."/>
            <person name="Johnson C."/>
            <person name="Wood J."/>
            <person name="Clark S."/>
            <person name="Pelan S."/>
            <person name="Griffiths G."/>
            <person name="Smith M."/>
            <person name="Glithero R."/>
            <person name="Howden P."/>
            <person name="Barker N."/>
            <person name="Lloyd C."/>
            <person name="Stevens C."/>
            <person name="Harley J."/>
            <person name="Holt K."/>
            <person name="Panagiotidis G."/>
            <person name="Lovell J."/>
            <person name="Beasley H."/>
            <person name="Henderson C."/>
            <person name="Gordon D."/>
            <person name="Auger K."/>
            <person name="Wright D."/>
            <person name="Collins J."/>
            <person name="Raisen C."/>
            <person name="Dyer L."/>
            <person name="Leung K."/>
            <person name="Robertson L."/>
            <person name="Ambridge K."/>
            <person name="Leongamornlert D."/>
            <person name="McGuire S."/>
            <person name="Gilderthorp R."/>
            <person name="Griffiths C."/>
            <person name="Manthravadi D."/>
            <person name="Nichol S."/>
            <person name="Barker G."/>
            <person name="Whitehead S."/>
            <person name="Kay M."/>
            <person name="Brown J."/>
            <person name="Murnane C."/>
            <person name="Gray E."/>
            <person name="Humphries M."/>
            <person name="Sycamore N."/>
            <person name="Barker D."/>
            <person name="Saunders D."/>
            <person name="Wallis J."/>
            <person name="Babbage A."/>
            <person name="Hammond S."/>
            <person name="Mashreghi-Mohammadi M."/>
            <person name="Barr L."/>
            <person name="Martin S."/>
            <person name="Wray P."/>
            <person name="Ellington A."/>
            <person name="Matthews N."/>
            <person name="Ellwood M."/>
            <person name="Woodmansey R."/>
            <person name="Clark G."/>
            <person name="Cooper J."/>
            <person name="Tromans A."/>
            <person name="Grafham D."/>
            <person name="Skuce C."/>
            <person name="Pandian R."/>
            <person name="Andrews R."/>
            <person name="Harrison E."/>
            <person name="Kimberley A."/>
            <person name="Garnett J."/>
            <person name="Fosker N."/>
            <person name="Hall R."/>
            <person name="Garner P."/>
            <person name="Kelly D."/>
            <person name="Bird C."/>
            <person name="Palmer S."/>
            <person name="Gehring I."/>
            <person name="Berger A."/>
            <person name="Dooley C.M."/>
            <person name="Ersan-Urun Z."/>
            <person name="Eser C."/>
            <person name="Geiger H."/>
            <person name="Geisler M."/>
            <person name="Karotki L."/>
            <person name="Kirn A."/>
            <person name="Konantz J."/>
            <person name="Konantz M."/>
            <person name="Oberlander M."/>
            <person name="Rudolph-Geiger S."/>
            <person name="Teucke M."/>
            <person name="Lanz C."/>
            <person name="Raddatz G."/>
            <person name="Osoegawa K."/>
            <person name="Zhu B."/>
            <person name="Rapp A."/>
            <person name="Widaa S."/>
            <person name="Langford C."/>
            <person name="Yang F."/>
            <person name="Schuster S.C."/>
            <person name="Carter N.P."/>
            <person name="Harrow J."/>
            <person name="Ning Z."/>
            <person name="Herrero J."/>
            <person name="Searle S.M."/>
            <person name="Enright A."/>
            <person name="Geisler R."/>
            <person name="Plasterk R.H."/>
            <person name="Lee C."/>
            <person name="Westerfield M."/>
            <person name="de Jong P.J."/>
            <person name="Zon L.I."/>
            <person name="Postlethwait J.H."/>
            <person name="Nusslein-Volhard C."/>
            <person name="Hubbard T.J."/>
            <person name="Roest Crollius H."/>
            <person name="Rogers J."/>
            <person name="Stemple D.L."/>
        </authorList>
    </citation>
    <scope>NUCLEOTIDE SEQUENCE [LARGE SCALE GENOMIC DNA]</scope>
    <source>
        <strain>Tuebingen</strain>
    </source>
</reference>
<comment type="function">
    <text evidence="1">Involved in cytokinesis and spindle organization. May play a role in actin cytoskeleton organization and microtubule stabilization and hence required for proper cell adhesion and migration (By similarity).</text>
</comment>
<comment type="subunit">
    <text evidence="1">May interact with both microtubules and actin cytoskeleton.</text>
</comment>
<comment type="subcellular location">
    <subcellularLocation>
        <location evidence="1">Cytoplasm</location>
        <location evidence="1">Cytoskeleton</location>
    </subcellularLocation>
    <subcellularLocation>
        <location evidence="1">Cytoplasm</location>
        <location evidence="1">Cytoskeleton</location>
        <location evidence="1">Spindle</location>
    </subcellularLocation>
    <subcellularLocation>
        <location evidence="1">Cell junction</location>
        <location evidence="1">Gap junction</location>
    </subcellularLocation>
    <text evidence="1">Colocalizes with beta-tubulin, acetylated alpha-tubulin and F-actin. Also observed in a ring around gamma-tubulin containing centrioles possibly in the microtubule organizing center (By similarity).</text>
</comment>
<comment type="similarity">
    <text evidence="5">Belongs to the cytospin-A family.</text>
</comment>
<feature type="chain" id="PRO_0000231023" description="Cytospin-A">
    <location>
        <begin position="1"/>
        <end position="1132"/>
    </location>
</feature>
<feature type="domain" description="Calponin-homology (CH)" evidence="3">
    <location>
        <begin position="1026"/>
        <end position="1131"/>
    </location>
</feature>
<feature type="region of interest" description="Disordered" evidence="4">
    <location>
        <begin position="1"/>
        <end position="166"/>
    </location>
</feature>
<feature type="region of interest" description="Disordered" evidence="4">
    <location>
        <begin position="301"/>
        <end position="381"/>
    </location>
</feature>
<feature type="region of interest" description="Disordered" evidence="4">
    <location>
        <begin position="869"/>
        <end position="895"/>
    </location>
</feature>
<feature type="region of interest" description="Disordered" evidence="4">
    <location>
        <begin position="939"/>
        <end position="1016"/>
    </location>
</feature>
<feature type="coiled-coil region" evidence="2">
    <location>
        <begin position="226"/>
        <end position="268"/>
    </location>
</feature>
<feature type="coiled-coil region" evidence="2">
    <location>
        <begin position="385"/>
        <end position="440"/>
    </location>
</feature>
<feature type="coiled-coil region" evidence="2">
    <location>
        <begin position="478"/>
        <end position="798"/>
    </location>
</feature>
<feature type="compositionally biased region" description="Low complexity" evidence="4">
    <location>
        <begin position="73"/>
        <end position="109"/>
    </location>
</feature>
<feature type="compositionally biased region" description="Low complexity" evidence="4">
    <location>
        <begin position="119"/>
        <end position="129"/>
    </location>
</feature>
<feature type="compositionally biased region" description="Basic and acidic residues" evidence="4">
    <location>
        <begin position="150"/>
        <end position="159"/>
    </location>
</feature>
<feature type="compositionally biased region" description="Polar residues" evidence="4">
    <location>
        <begin position="333"/>
        <end position="343"/>
    </location>
</feature>
<feature type="compositionally biased region" description="Low complexity" evidence="4">
    <location>
        <begin position="348"/>
        <end position="377"/>
    </location>
</feature>
<feature type="compositionally biased region" description="Pro residues" evidence="4">
    <location>
        <begin position="875"/>
        <end position="889"/>
    </location>
</feature>
<feature type="compositionally biased region" description="Polar residues" evidence="4">
    <location>
        <begin position="946"/>
        <end position="961"/>
    </location>
</feature>
<feature type="compositionally biased region" description="Basic and acidic residues" evidence="4">
    <location>
        <begin position="962"/>
        <end position="972"/>
    </location>
</feature>
<feature type="compositionally biased region" description="Low complexity" evidence="4">
    <location>
        <begin position="979"/>
        <end position="1000"/>
    </location>
</feature>
<feature type="sequence conflict" description="In Ref. 1; AAX84193." evidence="5" ref="1">
    <original>P</original>
    <variation>S</variation>
    <location>
        <position position="40"/>
    </location>
</feature>
<feature type="sequence conflict" description="In Ref. 1; AAX84193." evidence="5" ref="1">
    <original>T</original>
    <variation>N</variation>
    <location>
        <position position="1106"/>
    </location>
</feature>
<sequence>MKKAGRPVGNKAASGGGKGDSVTAGNCAGKNTVKSPTSAPLSKVKSNDDLLAAMAGSSAGTNNSVAKGKKSTSTHSTSCGTNTNNPDTKTKTTSGPSGKRTTSMTSKESNSSRERLRNSRNSSSKKQSSTGASDRAQPKHSRALAQTSDSESRMSKSKSDGQLSDKVALEAKVKNLLGLAKSKDVEILQLRGELRDMRVQLGLPEEDEEEERPPEREAAAVITAADVESTLLLLQEQNQAIRGELNLLKNENRMLKDRLNALGFSLEQRLDGADKTFGFPSTSPELSSGGAGAHGDCATVASSVEGSAPGSMEDLLTGGQRSGSTDNLDSESSEVYQAVTSSDDALDAPSGCGSSSSSESEGGPPACRSSSRKGSSGNTSEVSVACLTERIHQMEENQHSTSEELQATLQELADLQQITQELNGENERLGEEKVLLMDSLCQQSDKLEHCGRQIEYFRSLLDEHGVAYSVDEDIKSGRYMELEQRYVELAENARFEREQLLGVQQHLSNTLKMAEQDNAEAQNVIAALKERNHHMERLLDVERQERASMAAVLEECKAAVNNDQAELSRCRVLLEQERQKVAELYSIHNAGDKSDIHQLLEGVRLDKEEAEAKASKLQDDLGHARSEVACLQDTLNKLDAEYRDFQSVVQKELAEQKRAIEKQREDLQEKETEIGDMKETIFELEDEVEQHRAVKLHDNLIISDLENSMKKLQDQKHDMEREIKILHRRLREESAEWRQFQADLQTAVVIANDIKSEAQEEIGDLRRRLQEAQEKNEKLGKEIEEVKNRKQDEERGRVYNYMNAVERDLAALRQGMGLSRRPSTSSEPSPTVKTLIKSFDSASQGPGANATAVAAAAAAAAAAAAVTVTSTTPTAPLPRTPLSPSPMKTPPAAAVSPIQRHSITGSMAAAKPLSSLADKRPSYTDISMPAEHLLRAANSRPASALQRVSNMDTSKTITVSRRSSEEPKRDISTPDGGPASSLISMSSAAALSSSSSPTASVNPTARSRLREERKDPLSALAREYGGSKRNALLRWCQKKTEGYQNIDITNFSSSWNDGLAFCAVLHTYLPAHIPYQELNSQDKRRNFTLAFQAAESVGIKSTLDITDMVHTERPDWQSVMTYVTSIYKYFET</sequence>
<keyword id="KW-0131">Cell cycle</keyword>
<keyword id="KW-0132">Cell division</keyword>
<keyword id="KW-0965">Cell junction</keyword>
<keyword id="KW-0175">Coiled coil</keyword>
<keyword id="KW-0963">Cytoplasm</keyword>
<keyword id="KW-0206">Cytoskeleton</keyword>
<keyword id="KW-0303">Gap junction</keyword>
<keyword id="KW-1185">Reference proteome</keyword>
<protein>
    <recommendedName>
        <fullName>Cytospin-A</fullName>
    </recommendedName>
    <alternativeName>
        <fullName>SPECC1-like protein</fullName>
    </alternativeName>
    <alternativeName>
        <fullName>Sperm antigen with calponin homology and coiled-coil domains 1-like</fullName>
    </alternativeName>
</protein>
<name>CYTSA_DANRE</name>
<dbReference type="EMBL" id="AY884302">
    <property type="protein sequence ID" value="AAX84193.1"/>
    <property type="molecule type" value="mRNA"/>
</dbReference>
<dbReference type="EMBL" id="CR547121">
    <property type="protein sequence ID" value="CAQ15300.1"/>
    <property type="molecule type" value="Genomic_DNA"/>
</dbReference>
<dbReference type="RefSeq" id="NP_001034905.1">
    <property type="nucleotide sequence ID" value="NM_001039816.1"/>
</dbReference>
<dbReference type="RefSeq" id="XP_005167234.1">
    <property type="nucleotide sequence ID" value="XM_005167177.5"/>
</dbReference>
<dbReference type="SMR" id="Q2KN93"/>
<dbReference type="FunCoup" id="Q2KN93">
    <property type="interactions" value="1566"/>
</dbReference>
<dbReference type="STRING" id="7955.ENSDARP00000010292"/>
<dbReference type="PaxDb" id="7955-ENSDARP00000010292"/>
<dbReference type="Ensembl" id="ENSDART00000014046">
    <property type="protein sequence ID" value="ENSDARP00000010292"/>
    <property type="gene ID" value="ENSDARG00000006719"/>
</dbReference>
<dbReference type="Ensembl" id="ENSDART00000164976">
    <property type="protein sequence ID" value="ENSDARP00000135296"/>
    <property type="gene ID" value="ENSDARG00000006719"/>
</dbReference>
<dbReference type="GeneID" id="561775"/>
<dbReference type="KEGG" id="dre:561775"/>
<dbReference type="AGR" id="ZFIN:ZDB-GENE-060810-139"/>
<dbReference type="CTD" id="561775"/>
<dbReference type="ZFIN" id="ZDB-GENE-060810-139">
    <property type="gene designation" value="specc1la"/>
</dbReference>
<dbReference type="eggNOG" id="KOG4678">
    <property type="taxonomic scope" value="Eukaryota"/>
</dbReference>
<dbReference type="InParanoid" id="Q2KN93"/>
<dbReference type="OMA" id="ILHTSHW"/>
<dbReference type="OrthoDB" id="21607at2759"/>
<dbReference type="PhylomeDB" id="Q2KN93"/>
<dbReference type="TreeFam" id="TF316716"/>
<dbReference type="PRO" id="PR:Q2KN93"/>
<dbReference type="Proteomes" id="UP000000437">
    <property type="component" value="Alternate scaffold 8"/>
</dbReference>
<dbReference type="Proteomes" id="UP000000437">
    <property type="component" value="Chromosome 8"/>
</dbReference>
<dbReference type="Bgee" id="ENSDARG00000006719">
    <property type="expression patterns" value="Expressed in spleen and 20 other cell types or tissues"/>
</dbReference>
<dbReference type="GO" id="GO:0005737">
    <property type="term" value="C:cytoplasm"/>
    <property type="evidence" value="ECO:0007669"/>
    <property type="project" value="UniProtKB-KW"/>
</dbReference>
<dbReference type="GO" id="GO:0031941">
    <property type="term" value="C:filamentous actin"/>
    <property type="evidence" value="ECO:0000318"/>
    <property type="project" value="GO_Central"/>
</dbReference>
<dbReference type="GO" id="GO:0005921">
    <property type="term" value="C:gap junction"/>
    <property type="evidence" value="ECO:0007669"/>
    <property type="project" value="UniProtKB-SubCell"/>
</dbReference>
<dbReference type="GO" id="GO:0005815">
    <property type="term" value="C:microtubule organizing center"/>
    <property type="evidence" value="ECO:0000318"/>
    <property type="project" value="GO_Central"/>
</dbReference>
<dbReference type="GO" id="GO:0005819">
    <property type="term" value="C:spindle"/>
    <property type="evidence" value="ECO:0007669"/>
    <property type="project" value="UniProtKB-SubCell"/>
</dbReference>
<dbReference type="GO" id="GO:0030036">
    <property type="term" value="P:actin cytoskeleton organization"/>
    <property type="evidence" value="ECO:0000318"/>
    <property type="project" value="GO_Central"/>
</dbReference>
<dbReference type="GO" id="GO:0051301">
    <property type="term" value="P:cell division"/>
    <property type="evidence" value="ECO:0007669"/>
    <property type="project" value="UniProtKB-KW"/>
</dbReference>
<dbReference type="GO" id="GO:0060325">
    <property type="term" value="P:face morphogenesis"/>
    <property type="evidence" value="ECO:0000314"/>
    <property type="project" value="MGI"/>
</dbReference>
<dbReference type="CDD" id="cd21256">
    <property type="entry name" value="CH_CYTSA"/>
    <property type="match status" value="1"/>
</dbReference>
<dbReference type="FunFam" id="1.10.418.10:FF:000020">
    <property type="entry name" value="Cytospin-A isoform 1"/>
    <property type="match status" value="1"/>
</dbReference>
<dbReference type="Gene3D" id="1.10.418.10">
    <property type="entry name" value="Calponin-like domain"/>
    <property type="match status" value="1"/>
</dbReference>
<dbReference type="InterPro" id="IPR001715">
    <property type="entry name" value="CH_dom"/>
</dbReference>
<dbReference type="InterPro" id="IPR036872">
    <property type="entry name" value="CH_dom_sf"/>
</dbReference>
<dbReference type="InterPro" id="IPR050540">
    <property type="entry name" value="F-actin_Monoox_Mical"/>
</dbReference>
<dbReference type="PANTHER" id="PTHR23167">
    <property type="entry name" value="CALPONIN HOMOLOGY DOMAIN-CONTAINING PROTEIN DDB_G0272472-RELATED"/>
    <property type="match status" value="1"/>
</dbReference>
<dbReference type="PANTHER" id="PTHR23167:SF18">
    <property type="entry name" value="CYTOSPIN-A"/>
    <property type="match status" value="1"/>
</dbReference>
<dbReference type="Pfam" id="PF00307">
    <property type="entry name" value="CH"/>
    <property type="match status" value="1"/>
</dbReference>
<dbReference type="SMART" id="SM00033">
    <property type="entry name" value="CH"/>
    <property type="match status" value="1"/>
</dbReference>
<dbReference type="SUPFAM" id="SSF47576">
    <property type="entry name" value="Calponin-homology domain, CH-domain"/>
    <property type="match status" value="1"/>
</dbReference>
<dbReference type="PROSITE" id="PS50021">
    <property type="entry name" value="CH"/>
    <property type="match status" value="1"/>
</dbReference>
<accession>Q2KN93</accession>
<accession>B0UYP9</accession>
<organism>
    <name type="scientific">Danio rerio</name>
    <name type="common">Zebrafish</name>
    <name type="synonym">Brachydanio rerio</name>
    <dbReference type="NCBI Taxonomy" id="7955"/>
    <lineage>
        <taxon>Eukaryota</taxon>
        <taxon>Metazoa</taxon>
        <taxon>Chordata</taxon>
        <taxon>Craniata</taxon>
        <taxon>Vertebrata</taxon>
        <taxon>Euteleostomi</taxon>
        <taxon>Actinopterygii</taxon>
        <taxon>Neopterygii</taxon>
        <taxon>Teleostei</taxon>
        <taxon>Ostariophysi</taxon>
        <taxon>Cypriniformes</taxon>
        <taxon>Danionidae</taxon>
        <taxon>Danioninae</taxon>
        <taxon>Danio</taxon>
    </lineage>
</organism>
<gene>
    <name type="primary">specc1la</name>
    <name type="synonym">cytsa</name>
    <name type="synonym">cytsaa</name>
    <name type="synonym">specc1l</name>
    <name type="ORF">im:7159316</name>
    <name type="ORF">si:dkey-118g10.1</name>
</gene>
<evidence type="ECO:0000250" key="1"/>
<evidence type="ECO:0000255" key="2"/>
<evidence type="ECO:0000255" key="3">
    <source>
        <dbReference type="PROSITE-ProRule" id="PRU00044"/>
    </source>
</evidence>
<evidence type="ECO:0000256" key="4">
    <source>
        <dbReference type="SAM" id="MobiDB-lite"/>
    </source>
</evidence>
<evidence type="ECO:0000305" key="5"/>
<proteinExistence type="evidence at transcript level"/>